<accession>Q39070</accession>
<accession>O81794</accession>
<reference key="1">
    <citation type="journal article" date="1994" name="Proc. Natl. Acad. Sci. U.S.A.">
        <title>Three discrete classes of Arabidopsis cyclins are expressed during different intervals of the cell cycle.</title>
        <authorList>
            <person name="Ferreira P."/>
            <person name="Hemerly A."/>
            <person name="de Almeida Engler J."/>
            <person name="Bergounioux C."/>
            <person name="Burssens S."/>
            <person name="van Montagu M."/>
            <person name="Engler G."/>
            <person name="Inze D."/>
        </authorList>
    </citation>
    <scope>NUCLEOTIDE SEQUENCE [MRNA]</scope>
    <scope>TISSUE SPECIFICITY</scope>
    <source>
        <strain>cv. Columbia</strain>
        <tissue>Callus</tissue>
    </source>
</reference>
<reference key="2">
    <citation type="journal article" date="1999" name="Nature">
        <title>Sequence and analysis of chromosome 4 of the plant Arabidopsis thaliana.</title>
        <authorList>
            <person name="Mayer K.F.X."/>
            <person name="Schueller C."/>
            <person name="Wambutt R."/>
            <person name="Murphy G."/>
            <person name="Volckaert G."/>
            <person name="Pohl T."/>
            <person name="Duesterhoeft A."/>
            <person name="Stiekema W."/>
            <person name="Entian K.-D."/>
            <person name="Terryn N."/>
            <person name="Harris B."/>
            <person name="Ansorge W."/>
            <person name="Brandt P."/>
            <person name="Grivell L.A."/>
            <person name="Rieger M."/>
            <person name="Weichselgartner M."/>
            <person name="de Simone V."/>
            <person name="Obermaier B."/>
            <person name="Mache R."/>
            <person name="Mueller M."/>
            <person name="Kreis M."/>
            <person name="Delseny M."/>
            <person name="Puigdomenech P."/>
            <person name="Watson M."/>
            <person name="Schmidtheini T."/>
            <person name="Reichert B."/>
            <person name="Portetelle D."/>
            <person name="Perez-Alonso M."/>
            <person name="Boutry M."/>
            <person name="Bancroft I."/>
            <person name="Vos P."/>
            <person name="Hoheisel J."/>
            <person name="Zimmermann W."/>
            <person name="Wedler H."/>
            <person name="Ridley P."/>
            <person name="Langham S.-A."/>
            <person name="McCullagh B."/>
            <person name="Bilham L."/>
            <person name="Robben J."/>
            <person name="van der Schueren J."/>
            <person name="Grymonprez B."/>
            <person name="Chuang Y.-J."/>
            <person name="Vandenbussche F."/>
            <person name="Braeken M."/>
            <person name="Weltjens I."/>
            <person name="Voet M."/>
            <person name="Bastiaens I."/>
            <person name="Aert R."/>
            <person name="Defoor E."/>
            <person name="Weitzenegger T."/>
            <person name="Bothe G."/>
            <person name="Ramsperger U."/>
            <person name="Hilbert H."/>
            <person name="Braun M."/>
            <person name="Holzer E."/>
            <person name="Brandt A."/>
            <person name="Peters S."/>
            <person name="van Staveren M."/>
            <person name="Dirkse W."/>
            <person name="Mooijman P."/>
            <person name="Klein Lankhorst R."/>
            <person name="Rose M."/>
            <person name="Hauf J."/>
            <person name="Koetter P."/>
            <person name="Berneiser S."/>
            <person name="Hempel S."/>
            <person name="Feldpausch M."/>
            <person name="Lamberth S."/>
            <person name="Van den Daele H."/>
            <person name="De Keyser A."/>
            <person name="Buysshaert C."/>
            <person name="Gielen J."/>
            <person name="Villarroel R."/>
            <person name="De Clercq R."/>
            <person name="van Montagu M."/>
            <person name="Rogers J."/>
            <person name="Cronin A."/>
            <person name="Quail M.A."/>
            <person name="Bray-Allen S."/>
            <person name="Clark L."/>
            <person name="Doggett J."/>
            <person name="Hall S."/>
            <person name="Kay M."/>
            <person name="Lennard N."/>
            <person name="McLay K."/>
            <person name="Mayes R."/>
            <person name="Pettett A."/>
            <person name="Rajandream M.A."/>
            <person name="Lyne M."/>
            <person name="Benes V."/>
            <person name="Rechmann S."/>
            <person name="Borkova D."/>
            <person name="Bloecker H."/>
            <person name="Scharfe M."/>
            <person name="Grimm M."/>
            <person name="Loehnert T.-H."/>
            <person name="Dose S."/>
            <person name="de Haan M."/>
            <person name="Maarse A.C."/>
            <person name="Schaefer M."/>
            <person name="Mueller-Auer S."/>
            <person name="Gabel C."/>
            <person name="Fuchs M."/>
            <person name="Fartmann B."/>
            <person name="Granderath K."/>
            <person name="Dauner D."/>
            <person name="Herzl A."/>
            <person name="Neumann S."/>
            <person name="Argiriou A."/>
            <person name="Vitale D."/>
            <person name="Liguori R."/>
            <person name="Piravandi E."/>
            <person name="Massenet O."/>
            <person name="Quigley F."/>
            <person name="Clabauld G."/>
            <person name="Muendlein A."/>
            <person name="Felber R."/>
            <person name="Schnabl S."/>
            <person name="Hiller R."/>
            <person name="Schmidt W."/>
            <person name="Lecharny A."/>
            <person name="Aubourg S."/>
            <person name="Chefdor F."/>
            <person name="Cooke R."/>
            <person name="Berger C."/>
            <person name="Monfort A."/>
            <person name="Casacuberta E."/>
            <person name="Gibbons T."/>
            <person name="Weber N."/>
            <person name="Vandenbol M."/>
            <person name="Bargues M."/>
            <person name="Terol J."/>
            <person name="Torres A."/>
            <person name="Perez-Perez A."/>
            <person name="Purnelle B."/>
            <person name="Bent E."/>
            <person name="Johnson S."/>
            <person name="Tacon D."/>
            <person name="Jesse T."/>
            <person name="Heijnen L."/>
            <person name="Schwarz S."/>
            <person name="Scholler P."/>
            <person name="Heber S."/>
            <person name="Francs P."/>
            <person name="Bielke C."/>
            <person name="Frishman D."/>
            <person name="Haase D."/>
            <person name="Lemcke K."/>
            <person name="Mewes H.-W."/>
            <person name="Stocker S."/>
            <person name="Zaccaria P."/>
            <person name="Bevan M."/>
            <person name="Wilson R.K."/>
            <person name="de la Bastide M."/>
            <person name="Habermann K."/>
            <person name="Parnell L."/>
            <person name="Dedhia N."/>
            <person name="Gnoj L."/>
            <person name="Schutz K."/>
            <person name="Huang E."/>
            <person name="Spiegel L."/>
            <person name="Sekhon M."/>
            <person name="Murray J."/>
            <person name="Sheet P."/>
            <person name="Cordes M."/>
            <person name="Abu-Threideh J."/>
            <person name="Stoneking T."/>
            <person name="Kalicki J."/>
            <person name="Graves T."/>
            <person name="Harmon G."/>
            <person name="Edwards J."/>
            <person name="Latreille P."/>
            <person name="Courtney L."/>
            <person name="Cloud J."/>
            <person name="Abbott A."/>
            <person name="Scott K."/>
            <person name="Johnson D."/>
            <person name="Minx P."/>
            <person name="Bentley D."/>
            <person name="Fulton B."/>
            <person name="Miller N."/>
            <person name="Greco T."/>
            <person name="Kemp K."/>
            <person name="Kramer J."/>
            <person name="Fulton L."/>
            <person name="Mardis E."/>
            <person name="Dante M."/>
            <person name="Pepin K."/>
            <person name="Hillier L.W."/>
            <person name="Nelson J."/>
            <person name="Spieth J."/>
            <person name="Ryan E."/>
            <person name="Andrews S."/>
            <person name="Geisel C."/>
            <person name="Layman D."/>
            <person name="Du H."/>
            <person name="Ali J."/>
            <person name="Berghoff A."/>
            <person name="Jones K."/>
            <person name="Drone K."/>
            <person name="Cotton M."/>
            <person name="Joshu C."/>
            <person name="Antonoiu B."/>
            <person name="Zidanic M."/>
            <person name="Strong C."/>
            <person name="Sun H."/>
            <person name="Lamar B."/>
            <person name="Yordan C."/>
            <person name="Ma P."/>
            <person name="Zhong J."/>
            <person name="Preston R."/>
            <person name="Vil D."/>
            <person name="Shekher M."/>
            <person name="Matero A."/>
            <person name="Shah R."/>
            <person name="Swaby I.K."/>
            <person name="O'Shaughnessy A."/>
            <person name="Rodriguez M."/>
            <person name="Hoffman J."/>
            <person name="Till S."/>
            <person name="Granat S."/>
            <person name="Shohdy N."/>
            <person name="Hasegawa A."/>
            <person name="Hameed A."/>
            <person name="Lodhi M."/>
            <person name="Johnson A."/>
            <person name="Chen E."/>
            <person name="Marra M.A."/>
            <person name="Martienssen R."/>
            <person name="McCombie W.R."/>
        </authorList>
    </citation>
    <scope>NUCLEOTIDE SEQUENCE [LARGE SCALE GENOMIC DNA]</scope>
    <source>
        <strain>cv. Columbia</strain>
    </source>
</reference>
<reference key="3">
    <citation type="journal article" date="2017" name="Plant J.">
        <title>Araport11: a complete reannotation of the Arabidopsis thaliana reference genome.</title>
        <authorList>
            <person name="Cheng C.Y."/>
            <person name="Krishnakumar V."/>
            <person name="Chan A.P."/>
            <person name="Thibaud-Nissen F."/>
            <person name="Schobel S."/>
            <person name="Town C.D."/>
        </authorList>
    </citation>
    <scope>GENOME REANNOTATION</scope>
    <source>
        <strain>cv. Columbia</strain>
    </source>
</reference>
<reference key="4">
    <citation type="submission" date="2006-07" db="EMBL/GenBank/DDBJ databases">
        <title>Large-scale analysis of RIKEN Arabidopsis full-length (RAFL) cDNAs.</title>
        <authorList>
            <person name="Totoki Y."/>
            <person name="Seki M."/>
            <person name="Ishida J."/>
            <person name="Nakajima M."/>
            <person name="Enju A."/>
            <person name="Kamiya A."/>
            <person name="Narusaka M."/>
            <person name="Shin-i T."/>
            <person name="Nakagawa M."/>
            <person name="Sakamoto N."/>
            <person name="Oishi K."/>
            <person name="Kohara Y."/>
            <person name="Kobayashi M."/>
            <person name="Toyoda A."/>
            <person name="Sakaki Y."/>
            <person name="Sakurai T."/>
            <person name="Iida K."/>
            <person name="Akiyama K."/>
            <person name="Satou M."/>
            <person name="Toyoda T."/>
            <person name="Konagaya A."/>
            <person name="Carninci P."/>
            <person name="Kawai J."/>
            <person name="Hayashizaki Y."/>
            <person name="Shinozaki K."/>
        </authorList>
    </citation>
    <scope>NUCLEOTIDE SEQUENCE [LARGE SCALE MRNA]</scope>
    <source>
        <strain>cv. Columbia</strain>
    </source>
</reference>
<reference key="5">
    <citation type="journal article" date="2004" name="Plant Physiol.">
        <title>Genome-wide analysis of the cyclin family in Arabidopsis and comparative phylogenetic analysis of plant cyclin-like proteins.</title>
        <authorList>
            <person name="Wang G."/>
            <person name="Kong H."/>
            <person name="Sun Y."/>
            <person name="Zhang X."/>
            <person name="Zhang W."/>
            <person name="Altman N."/>
            <person name="dePamphilis C.W."/>
            <person name="Ma H."/>
        </authorList>
    </citation>
    <scope>GENE FAMILY</scope>
    <scope>NOMENCLATURE</scope>
</reference>
<reference key="6">
    <citation type="journal article" date="2011" name="PLoS ONE">
        <title>Conserved CDC20 cell cycle functions are carried out by two of the five isoforms in Arabidopsis thaliana.</title>
        <authorList>
            <person name="Kevei Z."/>
            <person name="Baloban M."/>
            <person name="Da Ines O."/>
            <person name="Tiricz H."/>
            <person name="Kroll A."/>
            <person name="Regulski K."/>
            <person name="Mergaert P."/>
            <person name="Kondorosi E."/>
        </authorList>
    </citation>
    <scope>INTERACTION WITH CDC20-1 AND CDC20-2</scope>
</reference>
<evidence type="ECO:0000256" key="1">
    <source>
        <dbReference type="SAM" id="MobiDB-lite"/>
    </source>
</evidence>
<evidence type="ECO:0000269" key="2">
    <source>
    </source>
</evidence>
<evidence type="ECO:0000269" key="3">
    <source>
    </source>
</evidence>
<evidence type="ECO:0000305" key="4"/>
<keyword id="KW-0131">Cell cycle</keyword>
<keyword id="KW-0132">Cell division</keyword>
<keyword id="KW-0195">Cyclin</keyword>
<keyword id="KW-1185">Reference proteome</keyword>
<protein>
    <recommendedName>
        <fullName>Cyclin-B2-2</fullName>
    </recommendedName>
    <alternativeName>
        <fullName>Cyc2b-At</fullName>
    </alternativeName>
    <alternativeName>
        <fullName>Cyclin-2b</fullName>
    </alternativeName>
    <alternativeName>
        <fullName>G2/mitotic-specific cyclin-B2-2</fullName>
        <shortName>CycB2;2</shortName>
    </alternativeName>
</protein>
<gene>
    <name type="primary">CYCB2-2</name>
    <name type="synonym">CYC2B</name>
    <name type="ordered locus">At4g35620</name>
    <name type="ORF">F8D20.130</name>
</gene>
<comment type="subunit">
    <text evidence="2">Interacts with CDC20-1 and CDC20-2.</text>
</comment>
<comment type="interaction">
    <interactant intactId="EBI-2651372">
        <id>Q39070</id>
    </interactant>
    <interactant intactId="EBI-4443426">
        <id>O48723</id>
        <label>PLP2</label>
    </interactant>
    <organismsDiffer>false</organismsDiffer>
    <experiments>3</experiments>
</comment>
<comment type="tissue specificity">
    <text evidence="3">Expressed in roots.</text>
</comment>
<comment type="similarity">
    <text evidence="4">Belongs to the cyclin family. Cyclin AB subfamily.</text>
</comment>
<sequence>MVNPEENNRNLVVKPITEILQDDDKRSRKFGVEMKRQNRRALGVINHNLVGAKAYPCVVNKRRGLSQRKQESCDKKKLDSLHPSISRSQEETKKLKPSGNEFGDCIFIDEEEEKNEEVTLDQPMPMSLEEPYIEFDPMEEEVEMEDMEEEQEEPVLDIDEYDANNSLAAVEYVQDLYDFYRKTERFSCVPLDYMAQQFDISDKMRAILIDWLIEVHDKFELMNETLFLTVNLIDRFLSKQAVARKKLQLVGLVALLLACKYEEVSVPIVEDLVVISDKAYTRTDVLEMEKIMLSTLQFNMSLPTQYPFLKRFLKAAQSDKKLEILASFLIELALVDYEMVRYPPSLLAATAVYTAQCTIHGFSEWNSTCEFHCHYSENQLLECCRRMVRLHQKAGTDKLTGVHRKYSSSKFGYIATKYEAAHFLVSDSH</sequence>
<proteinExistence type="evidence at protein level"/>
<name>CCB22_ARATH</name>
<dbReference type="EMBL" id="Z31401">
    <property type="protein sequence ID" value="CAA83276.1"/>
    <property type="molecule type" value="mRNA"/>
</dbReference>
<dbReference type="EMBL" id="AL031135">
    <property type="protein sequence ID" value="CAA20032.1"/>
    <property type="molecule type" value="Genomic_DNA"/>
</dbReference>
<dbReference type="EMBL" id="AL161587">
    <property type="protein sequence ID" value="CAB80278.1"/>
    <property type="molecule type" value="Genomic_DNA"/>
</dbReference>
<dbReference type="EMBL" id="CP002687">
    <property type="protein sequence ID" value="AEE86541.1"/>
    <property type="molecule type" value="Genomic_DNA"/>
</dbReference>
<dbReference type="EMBL" id="AK226721">
    <property type="protein sequence ID" value="BAE98826.1"/>
    <property type="molecule type" value="mRNA"/>
</dbReference>
<dbReference type="PIR" id="T04667">
    <property type="entry name" value="T04667"/>
</dbReference>
<dbReference type="RefSeq" id="NP_195287.1">
    <property type="nucleotide sequence ID" value="NM_119727.4"/>
</dbReference>
<dbReference type="SMR" id="Q39070"/>
<dbReference type="BioGRID" id="14996">
    <property type="interactions" value="16"/>
</dbReference>
<dbReference type="FunCoup" id="Q39070">
    <property type="interactions" value="1381"/>
</dbReference>
<dbReference type="IntAct" id="Q39070">
    <property type="interactions" value="11"/>
</dbReference>
<dbReference type="STRING" id="3702.Q39070"/>
<dbReference type="PaxDb" id="3702-AT4G35620.1"/>
<dbReference type="ProteomicsDB" id="224440"/>
<dbReference type="EnsemblPlants" id="AT4G35620.1">
    <property type="protein sequence ID" value="AT4G35620.1"/>
    <property type="gene ID" value="AT4G35620"/>
</dbReference>
<dbReference type="GeneID" id="829714"/>
<dbReference type="Gramene" id="AT4G35620.1">
    <property type="protein sequence ID" value="AT4G35620.1"/>
    <property type="gene ID" value="AT4G35620"/>
</dbReference>
<dbReference type="KEGG" id="ath:AT4G35620"/>
<dbReference type="Araport" id="AT4G35620"/>
<dbReference type="TAIR" id="AT4G35620">
    <property type="gene designation" value="CYCB2"/>
</dbReference>
<dbReference type="eggNOG" id="KOG0653">
    <property type="taxonomic scope" value="Eukaryota"/>
</dbReference>
<dbReference type="HOGENOM" id="CLU_020695_0_0_1"/>
<dbReference type="InParanoid" id="Q39070"/>
<dbReference type="OMA" id="WSTTCEL"/>
<dbReference type="PhylomeDB" id="Q39070"/>
<dbReference type="PRO" id="PR:Q39070"/>
<dbReference type="Proteomes" id="UP000006548">
    <property type="component" value="Chromosome 4"/>
</dbReference>
<dbReference type="ExpressionAtlas" id="Q39070">
    <property type="expression patterns" value="baseline and differential"/>
</dbReference>
<dbReference type="GO" id="GO:0016538">
    <property type="term" value="F:cyclin-dependent protein serine/threonine kinase regulator activity"/>
    <property type="evidence" value="ECO:0007669"/>
    <property type="project" value="InterPro"/>
</dbReference>
<dbReference type="GO" id="GO:0051301">
    <property type="term" value="P:cell division"/>
    <property type="evidence" value="ECO:0007669"/>
    <property type="project" value="UniProtKB-KW"/>
</dbReference>
<dbReference type="GO" id="GO:0044772">
    <property type="term" value="P:mitotic cell cycle phase transition"/>
    <property type="evidence" value="ECO:0007669"/>
    <property type="project" value="InterPro"/>
</dbReference>
<dbReference type="CDD" id="cd20567">
    <property type="entry name" value="CYCLIN_AtCycB-like_rpt1"/>
    <property type="match status" value="1"/>
</dbReference>
<dbReference type="CDD" id="cd20511">
    <property type="entry name" value="CYCLIN_AtCycB-like_rpt2"/>
    <property type="match status" value="1"/>
</dbReference>
<dbReference type="FunFam" id="1.10.472.10:FF:000032">
    <property type="entry name" value="G2/mitotic-specific cyclin-1"/>
    <property type="match status" value="1"/>
</dbReference>
<dbReference type="Gene3D" id="1.10.472.10">
    <property type="entry name" value="Cyclin-like"/>
    <property type="match status" value="2"/>
</dbReference>
<dbReference type="InterPro" id="IPR039361">
    <property type="entry name" value="Cyclin"/>
</dbReference>
<dbReference type="InterPro" id="IPR013763">
    <property type="entry name" value="Cyclin-like_dom"/>
</dbReference>
<dbReference type="InterPro" id="IPR036915">
    <property type="entry name" value="Cyclin-like_sf"/>
</dbReference>
<dbReference type="InterPro" id="IPR046965">
    <property type="entry name" value="Cyclin_A/B-like"/>
</dbReference>
<dbReference type="InterPro" id="IPR004367">
    <property type="entry name" value="Cyclin_C-dom"/>
</dbReference>
<dbReference type="InterPro" id="IPR006671">
    <property type="entry name" value="Cyclin_N"/>
</dbReference>
<dbReference type="InterPro" id="IPR048258">
    <property type="entry name" value="Cyclins_cyclin-box"/>
</dbReference>
<dbReference type="PANTHER" id="PTHR10177">
    <property type="entry name" value="CYCLINS"/>
    <property type="match status" value="1"/>
</dbReference>
<dbReference type="Pfam" id="PF02984">
    <property type="entry name" value="Cyclin_C"/>
    <property type="match status" value="1"/>
</dbReference>
<dbReference type="Pfam" id="PF00134">
    <property type="entry name" value="Cyclin_N"/>
    <property type="match status" value="1"/>
</dbReference>
<dbReference type="PIRSF" id="PIRSF001771">
    <property type="entry name" value="Cyclin_A_B_D_E"/>
    <property type="match status" value="1"/>
</dbReference>
<dbReference type="SMART" id="SM00385">
    <property type="entry name" value="CYCLIN"/>
    <property type="match status" value="2"/>
</dbReference>
<dbReference type="SMART" id="SM01332">
    <property type="entry name" value="Cyclin_C"/>
    <property type="match status" value="1"/>
</dbReference>
<dbReference type="SUPFAM" id="SSF47954">
    <property type="entry name" value="Cyclin-like"/>
    <property type="match status" value="2"/>
</dbReference>
<dbReference type="PROSITE" id="PS00292">
    <property type="entry name" value="CYCLINS"/>
    <property type="match status" value="1"/>
</dbReference>
<feature type="chain" id="PRO_0000287013" description="Cyclin-B2-2">
    <location>
        <begin position="1"/>
        <end position="429"/>
    </location>
</feature>
<feature type="region of interest" description="Disordered" evidence="1">
    <location>
        <begin position="66"/>
        <end position="98"/>
    </location>
</feature>
<feature type="compositionally biased region" description="Basic and acidic residues" evidence="1">
    <location>
        <begin position="68"/>
        <end position="80"/>
    </location>
</feature>
<feature type="sequence conflict" description="In Ref. 1; CAA83276." evidence="4" ref="1">
    <original>E</original>
    <variation>G</variation>
    <location>
        <position position="160"/>
    </location>
</feature>
<feature type="sequence conflict" description="In Ref. 1; CAA83276." evidence="4" ref="1">
    <original>C</original>
    <variation>R</variation>
    <location>
        <position position="383"/>
    </location>
</feature>
<organism>
    <name type="scientific">Arabidopsis thaliana</name>
    <name type="common">Mouse-ear cress</name>
    <dbReference type="NCBI Taxonomy" id="3702"/>
    <lineage>
        <taxon>Eukaryota</taxon>
        <taxon>Viridiplantae</taxon>
        <taxon>Streptophyta</taxon>
        <taxon>Embryophyta</taxon>
        <taxon>Tracheophyta</taxon>
        <taxon>Spermatophyta</taxon>
        <taxon>Magnoliopsida</taxon>
        <taxon>eudicotyledons</taxon>
        <taxon>Gunneridae</taxon>
        <taxon>Pentapetalae</taxon>
        <taxon>rosids</taxon>
        <taxon>malvids</taxon>
        <taxon>Brassicales</taxon>
        <taxon>Brassicaceae</taxon>
        <taxon>Camelineae</taxon>
        <taxon>Arabidopsis</taxon>
    </lineage>
</organism>